<organism>
    <name type="scientific">Ajellomyces capsulatus (strain G186AR / H82 / ATCC MYA-2454 / RMSCC 2432)</name>
    <name type="common">Darling's disease fungus</name>
    <name type="synonym">Histoplasma capsulatum</name>
    <dbReference type="NCBI Taxonomy" id="447093"/>
    <lineage>
        <taxon>Eukaryota</taxon>
        <taxon>Fungi</taxon>
        <taxon>Dikarya</taxon>
        <taxon>Ascomycota</taxon>
        <taxon>Pezizomycotina</taxon>
        <taxon>Eurotiomycetes</taxon>
        <taxon>Eurotiomycetidae</taxon>
        <taxon>Onygenales</taxon>
        <taxon>Ajellomycetaceae</taxon>
        <taxon>Histoplasma</taxon>
    </lineage>
</organism>
<evidence type="ECO:0000255" key="1">
    <source>
        <dbReference type="HAMAP-Rule" id="MF_03112"/>
    </source>
</evidence>
<dbReference type="EC" id="3.6.-.-" evidence="1"/>
<dbReference type="EMBL" id="GG663372">
    <property type="protein sequence ID" value="EEH04836.1"/>
    <property type="molecule type" value="Genomic_DNA"/>
</dbReference>
<dbReference type="SMR" id="C0NV23"/>
<dbReference type="FunCoup" id="C0NV23">
    <property type="interactions" value="926"/>
</dbReference>
<dbReference type="STRING" id="447093.C0NV23"/>
<dbReference type="VEuPathDB" id="FungiDB:I7I50_12417"/>
<dbReference type="HOGENOM" id="CLU_040761_0_0_1"/>
<dbReference type="InParanoid" id="C0NV23"/>
<dbReference type="Proteomes" id="UP000001631">
    <property type="component" value="Unassembled WGS sequence"/>
</dbReference>
<dbReference type="GO" id="GO:0043529">
    <property type="term" value="C:GET complex"/>
    <property type="evidence" value="ECO:0007669"/>
    <property type="project" value="TreeGrafter"/>
</dbReference>
<dbReference type="GO" id="GO:0005524">
    <property type="term" value="F:ATP binding"/>
    <property type="evidence" value="ECO:0007669"/>
    <property type="project" value="UniProtKB-UniRule"/>
</dbReference>
<dbReference type="GO" id="GO:0016887">
    <property type="term" value="F:ATP hydrolysis activity"/>
    <property type="evidence" value="ECO:0007669"/>
    <property type="project" value="InterPro"/>
</dbReference>
<dbReference type="GO" id="GO:0046872">
    <property type="term" value="F:metal ion binding"/>
    <property type="evidence" value="ECO:0007669"/>
    <property type="project" value="UniProtKB-KW"/>
</dbReference>
<dbReference type="GO" id="GO:0071816">
    <property type="term" value="P:tail-anchored membrane protein insertion into ER membrane"/>
    <property type="evidence" value="ECO:0007669"/>
    <property type="project" value="TreeGrafter"/>
</dbReference>
<dbReference type="CDD" id="cd02035">
    <property type="entry name" value="ArsA"/>
    <property type="match status" value="1"/>
</dbReference>
<dbReference type="FunFam" id="3.40.50.300:FF:000235">
    <property type="entry name" value="ATPase ASNA1"/>
    <property type="match status" value="1"/>
</dbReference>
<dbReference type="Gene3D" id="3.40.50.300">
    <property type="entry name" value="P-loop containing nucleotide triphosphate hydrolases"/>
    <property type="match status" value="1"/>
</dbReference>
<dbReference type="HAMAP" id="MF_03112">
    <property type="entry name" value="Asna1_Get3"/>
    <property type="match status" value="1"/>
</dbReference>
<dbReference type="InterPro" id="IPR025723">
    <property type="entry name" value="Anion-transp_ATPase-like_dom"/>
</dbReference>
<dbReference type="InterPro" id="IPR016300">
    <property type="entry name" value="ATPase_ArsA/GET3"/>
</dbReference>
<dbReference type="InterPro" id="IPR027542">
    <property type="entry name" value="ATPase_ArsA/GET3_euk"/>
</dbReference>
<dbReference type="InterPro" id="IPR027417">
    <property type="entry name" value="P-loop_NTPase"/>
</dbReference>
<dbReference type="NCBIfam" id="TIGR00345">
    <property type="entry name" value="GET3_arsA_TRC40"/>
    <property type="match status" value="1"/>
</dbReference>
<dbReference type="PANTHER" id="PTHR10803">
    <property type="entry name" value="ARSENICAL PUMP-DRIVING ATPASE ARSENITE-TRANSLOCATING ATPASE"/>
    <property type="match status" value="1"/>
</dbReference>
<dbReference type="PANTHER" id="PTHR10803:SF3">
    <property type="entry name" value="ATPASE GET3"/>
    <property type="match status" value="1"/>
</dbReference>
<dbReference type="Pfam" id="PF02374">
    <property type="entry name" value="ArsA_ATPase"/>
    <property type="match status" value="1"/>
</dbReference>
<dbReference type="SUPFAM" id="SSF52540">
    <property type="entry name" value="P-loop containing nucleoside triphosphate hydrolases"/>
    <property type="match status" value="1"/>
</dbReference>
<accession>C0NV23</accession>
<keyword id="KW-0067">ATP-binding</keyword>
<keyword id="KW-0963">Cytoplasm</keyword>
<keyword id="KW-0256">Endoplasmic reticulum</keyword>
<keyword id="KW-0378">Hydrolase</keyword>
<keyword id="KW-0479">Metal-binding</keyword>
<keyword id="KW-0547">Nucleotide-binding</keyword>
<keyword id="KW-1185">Reference proteome</keyword>
<keyword id="KW-0813">Transport</keyword>
<keyword id="KW-0862">Zinc</keyword>
<sequence length="341" mass="37433">MSSTAMVSGDDSLEPTLQSLLDQKTLRWVFVGGKGGVGKTTTSCSLAIQLAKVRKSVLLISTDPAHNLSDAFGQKFGKEARLVDGFDNLSAMEIDPNGSIQDLLSTGGDQADDPMAGLGLGGMMQDLAFSIPGVDEAMSFAEVLKQVKSLSYEVIVFDTAPTGHTLRFLQFPTVLEKALAKLSQLSSQFGPMLNSILGARGGLPGGQNLDEILSKMESLRETIGEVNAQFKDADLTTFVCVCIAEFLSLYETERMIQELTSYQIDTHCIVVNQLLFPGKDSSCEQCKARRKMQKKYLNEIEDLYEDFNVVRMPMLVEEVRGKEKLEKFSDMLVNPYVPPEE</sequence>
<feature type="chain" id="PRO_0000388181" description="ATPase GET3">
    <location>
        <begin position="1"/>
        <end position="341"/>
    </location>
</feature>
<feature type="active site" evidence="1">
    <location>
        <position position="63"/>
    </location>
</feature>
<feature type="binding site" evidence="1">
    <location>
        <begin position="34"/>
        <end position="41"/>
    </location>
    <ligand>
        <name>ATP</name>
        <dbReference type="ChEBI" id="CHEBI:30616"/>
    </ligand>
</feature>
<feature type="binding site" evidence="1">
    <location>
        <position position="245"/>
    </location>
    <ligand>
        <name>ATP</name>
        <dbReference type="ChEBI" id="CHEBI:30616"/>
    </ligand>
</feature>
<feature type="binding site" evidence="1">
    <location>
        <position position="272"/>
    </location>
    <ligand>
        <name>ATP</name>
        <dbReference type="ChEBI" id="CHEBI:30616"/>
    </ligand>
</feature>
<feature type="binding site" evidence="1">
    <location>
        <position position="283"/>
    </location>
    <ligand>
        <name>Zn(2+)</name>
        <dbReference type="ChEBI" id="CHEBI:29105"/>
        <note>ligand shared between dimeric partners</note>
    </ligand>
</feature>
<feature type="binding site" evidence="1">
    <location>
        <position position="286"/>
    </location>
    <ligand>
        <name>Zn(2+)</name>
        <dbReference type="ChEBI" id="CHEBI:29105"/>
        <note>ligand shared between dimeric partners</note>
    </ligand>
</feature>
<reference key="1">
    <citation type="submission" date="2009-02" db="EMBL/GenBank/DDBJ databases">
        <title>The genome sequence of Ajellomyces capsulatus strain G186AR.</title>
        <authorList>
            <person name="Champion M."/>
            <person name="Cuomo C.A."/>
            <person name="Ma L.-J."/>
            <person name="Henn M.R."/>
            <person name="Sil A."/>
            <person name="Goldman B."/>
            <person name="Young S.K."/>
            <person name="Kodira C.D."/>
            <person name="Zeng Q."/>
            <person name="Koehrsen M."/>
            <person name="Alvarado L."/>
            <person name="Berlin A."/>
            <person name="Borenstein D."/>
            <person name="Chen Z."/>
            <person name="Engels R."/>
            <person name="Freedman E."/>
            <person name="Gellesch M."/>
            <person name="Goldberg J."/>
            <person name="Griggs A."/>
            <person name="Gujja S."/>
            <person name="Heiman D."/>
            <person name="Hepburn T."/>
            <person name="Howarth C."/>
            <person name="Jen D."/>
            <person name="Larson L."/>
            <person name="Lewis B."/>
            <person name="Mehta T."/>
            <person name="Park D."/>
            <person name="Pearson M."/>
            <person name="Roberts A."/>
            <person name="Saif S."/>
            <person name="Shea T."/>
            <person name="Shenoy N."/>
            <person name="Sisk P."/>
            <person name="Stolte C."/>
            <person name="Sykes S."/>
            <person name="Walk T."/>
            <person name="White J."/>
            <person name="Yandava C."/>
            <person name="Klein B."/>
            <person name="McEwen J.G."/>
            <person name="Puccia R."/>
            <person name="Goldman G.H."/>
            <person name="Felipe M.S."/>
            <person name="Nino-Vega G."/>
            <person name="San-Blas G."/>
            <person name="Taylor J."/>
            <person name="Mendoza L."/>
            <person name="Galagan J.E."/>
            <person name="Nusbaum C."/>
            <person name="Birren B.W."/>
        </authorList>
    </citation>
    <scope>NUCLEOTIDE SEQUENCE [LARGE SCALE GENOMIC DNA]</scope>
    <source>
        <strain>G186AR / H82 / ATCC MYA-2454 / RMSCC 2432</strain>
    </source>
</reference>
<proteinExistence type="inferred from homology"/>
<name>GET3_AJECG</name>
<gene>
    <name evidence="1" type="primary">GET3</name>
    <name type="ORF">HCBG_06787</name>
</gene>
<comment type="function">
    <text evidence="1">ATPase required for the post-translational delivery of tail-anchored (TA) proteins to the endoplasmic reticulum. Recognizes and selectively binds the transmembrane domain of TA proteins in the cytosol. This complex then targets to the endoplasmic reticulum by membrane-bound receptors, where the tail-anchored protein is released for insertion. This process is regulated by ATP binding and hydrolysis. ATP binding drives the homodimer towards the closed dimer state, facilitating recognition of newly synthesized TA membrane proteins. ATP hydrolysis is required for insertion. Subsequently, the homodimer reverts towards the open dimer state, lowering its affinity for the membrane-bound receptor, and returning it to the cytosol to initiate a new round of targeting.</text>
</comment>
<comment type="subunit">
    <text evidence="1">Homodimer.</text>
</comment>
<comment type="subcellular location">
    <subcellularLocation>
        <location evidence="1">Cytoplasm</location>
    </subcellularLocation>
    <subcellularLocation>
        <location evidence="1">Endoplasmic reticulum</location>
    </subcellularLocation>
</comment>
<comment type="similarity">
    <text evidence="1">Belongs to the arsA ATPase family.</text>
</comment>
<protein>
    <recommendedName>
        <fullName evidence="1">ATPase GET3</fullName>
        <ecNumber evidence="1">3.6.-.-</ecNumber>
    </recommendedName>
    <alternativeName>
        <fullName evidence="1">Arsenical pump-driving ATPase</fullName>
    </alternativeName>
    <alternativeName>
        <fullName evidence="1">Arsenite-stimulated ATPase</fullName>
    </alternativeName>
    <alternativeName>
        <fullName evidence="1">Golgi to ER traffic protein 3</fullName>
    </alternativeName>
    <alternativeName>
        <fullName evidence="1">Guided entry of tail-anchored proteins 3</fullName>
    </alternativeName>
</protein>